<evidence type="ECO:0000255" key="1">
    <source>
        <dbReference type="HAMAP-Rule" id="MF_00418"/>
    </source>
</evidence>
<evidence type="ECO:0000305" key="2"/>
<gene>
    <name evidence="1" type="primary">dapA</name>
    <name type="ordered locus">cu0862</name>
</gene>
<comment type="function">
    <text evidence="1">Catalyzes the condensation of (S)-aspartate-beta-semialdehyde [(S)-ASA] and pyruvate to 4-hydroxy-tetrahydrodipicolinate (HTPA).</text>
</comment>
<comment type="catalytic activity">
    <reaction evidence="1">
        <text>L-aspartate 4-semialdehyde + pyruvate = (2S,4S)-4-hydroxy-2,3,4,5-tetrahydrodipicolinate + H2O + H(+)</text>
        <dbReference type="Rhea" id="RHEA:34171"/>
        <dbReference type="ChEBI" id="CHEBI:15361"/>
        <dbReference type="ChEBI" id="CHEBI:15377"/>
        <dbReference type="ChEBI" id="CHEBI:15378"/>
        <dbReference type="ChEBI" id="CHEBI:67139"/>
        <dbReference type="ChEBI" id="CHEBI:537519"/>
        <dbReference type="EC" id="4.3.3.7"/>
    </reaction>
</comment>
<comment type="pathway">
    <text evidence="1">Amino-acid biosynthesis; L-lysine biosynthesis via DAP pathway; (S)-tetrahydrodipicolinate from L-aspartate: step 3/4.</text>
</comment>
<comment type="subunit">
    <text evidence="1">Homotetramer; dimer of dimers.</text>
</comment>
<comment type="subcellular location">
    <subcellularLocation>
        <location evidence="1">Cytoplasm</location>
    </subcellularLocation>
</comment>
<comment type="similarity">
    <text evidence="1">Belongs to the DapA family.</text>
</comment>
<comment type="caution">
    <text evidence="2">Was originally thought to be a dihydrodipicolinate synthase (DHDPS), catalyzing the condensation of (S)-aspartate-beta-semialdehyde [(S)-ASA] and pyruvate to dihydrodipicolinate (DHDP). However, it was shown in E.coli that the product of the enzymatic reaction is not dihydrodipicolinate but in fact (4S)-4-hydroxy-2,3,4,5-tetrahydro-(2S)-dipicolinic acid (HTPA), and that the consecutive dehydration reaction leading to DHDP is not spontaneous but catalyzed by DapB.</text>
</comment>
<proteinExistence type="inferred from homology"/>
<feature type="chain" id="PRO_1000124025" description="4-hydroxy-tetrahydrodipicolinate synthase">
    <location>
        <begin position="1"/>
        <end position="300"/>
    </location>
</feature>
<feature type="active site" description="Proton donor/acceptor" evidence="1">
    <location>
        <position position="145"/>
    </location>
</feature>
<feature type="active site" description="Schiff-base intermediate with substrate" evidence="1">
    <location>
        <position position="173"/>
    </location>
</feature>
<feature type="binding site" evidence="1">
    <location>
        <position position="57"/>
    </location>
    <ligand>
        <name>pyruvate</name>
        <dbReference type="ChEBI" id="CHEBI:15361"/>
    </ligand>
</feature>
<feature type="binding site" evidence="1">
    <location>
        <position position="213"/>
    </location>
    <ligand>
        <name>pyruvate</name>
        <dbReference type="ChEBI" id="CHEBI:15361"/>
    </ligand>
</feature>
<feature type="site" description="Part of a proton relay during catalysis" evidence="1">
    <location>
        <position position="56"/>
    </location>
</feature>
<feature type="site" description="Part of a proton relay during catalysis" evidence="1">
    <location>
        <position position="119"/>
    </location>
</feature>
<sequence>MSTGNAAIRGAEHFGTVSVAMVTPFHKDGTIDLKAGVELAGYLVDKGCDSLVLAGTTGESPTTTNEEKINLLKAVRAELGDSVKLIAGTGTNNTASTIELSRLSQDAGADSLLVVTPYYSRPSQEGLFQHFTAVADSVDLPICLYDIPSRSVVPIELDTIQRLSEHENIQAVKDAKGKLPEALQLLQNTDLAWYSGDDPLNLPFLSVGATGFISVIGHLAADRLRALRDAYDQGDLAGAQQIAASLAPLERAQGRLGGVTMVKAALKLRGKDVGAPRLPILEVDPAELDQLEQDLQDAGV</sequence>
<dbReference type="EC" id="4.3.3.7" evidence="1"/>
<dbReference type="EMBL" id="AM942444">
    <property type="protein sequence ID" value="CAQ04822.1"/>
    <property type="molecule type" value="Genomic_DNA"/>
</dbReference>
<dbReference type="RefSeq" id="WP_012360111.1">
    <property type="nucleotide sequence ID" value="NC_010545.1"/>
</dbReference>
<dbReference type="SMR" id="B1VDC4"/>
<dbReference type="STRING" id="504474.cu0862"/>
<dbReference type="GeneID" id="60603638"/>
<dbReference type="KEGG" id="cur:cu0862"/>
<dbReference type="eggNOG" id="COG0329">
    <property type="taxonomic scope" value="Bacteria"/>
</dbReference>
<dbReference type="HOGENOM" id="CLU_049343_7_1_11"/>
<dbReference type="UniPathway" id="UPA00034">
    <property type="reaction ID" value="UER00017"/>
</dbReference>
<dbReference type="Proteomes" id="UP000001727">
    <property type="component" value="Chromosome"/>
</dbReference>
<dbReference type="GO" id="GO:0005829">
    <property type="term" value="C:cytosol"/>
    <property type="evidence" value="ECO:0007669"/>
    <property type="project" value="TreeGrafter"/>
</dbReference>
<dbReference type="GO" id="GO:0008840">
    <property type="term" value="F:4-hydroxy-tetrahydrodipicolinate synthase activity"/>
    <property type="evidence" value="ECO:0007669"/>
    <property type="project" value="UniProtKB-UniRule"/>
</dbReference>
<dbReference type="GO" id="GO:0019877">
    <property type="term" value="P:diaminopimelate biosynthetic process"/>
    <property type="evidence" value="ECO:0007669"/>
    <property type="project" value="UniProtKB-UniRule"/>
</dbReference>
<dbReference type="GO" id="GO:0009089">
    <property type="term" value="P:lysine biosynthetic process via diaminopimelate"/>
    <property type="evidence" value="ECO:0007669"/>
    <property type="project" value="UniProtKB-UniRule"/>
</dbReference>
<dbReference type="CDD" id="cd00950">
    <property type="entry name" value="DHDPS"/>
    <property type="match status" value="1"/>
</dbReference>
<dbReference type="Gene3D" id="3.20.20.70">
    <property type="entry name" value="Aldolase class I"/>
    <property type="match status" value="1"/>
</dbReference>
<dbReference type="HAMAP" id="MF_00418">
    <property type="entry name" value="DapA"/>
    <property type="match status" value="1"/>
</dbReference>
<dbReference type="InterPro" id="IPR013785">
    <property type="entry name" value="Aldolase_TIM"/>
</dbReference>
<dbReference type="InterPro" id="IPR005263">
    <property type="entry name" value="DapA"/>
</dbReference>
<dbReference type="InterPro" id="IPR002220">
    <property type="entry name" value="DapA-like"/>
</dbReference>
<dbReference type="InterPro" id="IPR020625">
    <property type="entry name" value="Schiff_base-form_aldolases_AS"/>
</dbReference>
<dbReference type="InterPro" id="IPR020624">
    <property type="entry name" value="Schiff_base-form_aldolases_CS"/>
</dbReference>
<dbReference type="NCBIfam" id="TIGR00674">
    <property type="entry name" value="dapA"/>
    <property type="match status" value="1"/>
</dbReference>
<dbReference type="PANTHER" id="PTHR12128:SF66">
    <property type="entry name" value="4-HYDROXY-2-OXOGLUTARATE ALDOLASE, MITOCHONDRIAL"/>
    <property type="match status" value="1"/>
</dbReference>
<dbReference type="PANTHER" id="PTHR12128">
    <property type="entry name" value="DIHYDRODIPICOLINATE SYNTHASE"/>
    <property type="match status" value="1"/>
</dbReference>
<dbReference type="Pfam" id="PF00701">
    <property type="entry name" value="DHDPS"/>
    <property type="match status" value="1"/>
</dbReference>
<dbReference type="PIRSF" id="PIRSF001365">
    <property type="entry name" value="DHDPS"/>
    <property type="match status" value="1"/>
</dbReference>
<dbReference type="PRINTS" id="PR00146">
    <property type="entry name" value="DHPICSNTHASE"/>
</dbReference>
<dbReference type="SMART" id="SM01130">
    <property type="entry name" value="DHDPS"/>
    <property type="match status" value="1"/>
</dbReference>
<dbReference type="SUPFAM" id="SSF51569">
    <property type="entry name" value="Aldolase"/>
    <property type="match status" value="1"/>
</dbReference>
<dbReference type="PROSITE" id="PS00665">
    <property type="entry name" value="DHDPS_1"/>
    <property type="match status" value="1"/>
</dbReference>
<dbReference type="PROSITE" id="PS00666">
    <property type="entry name" value="DHDPS_2"/>
    <property type="match status" value="1"/>
</dbReference>
<keyword id="KW-0028">Amino-acid biosynthesis</keyword>
<keyword id="KW-0963">Cytoplasm</keyword>
<keyword id="KW-0220">Diaminopimelate biosynthesis</keyword>
<keyword id="KW-0456">Lyase</keyword>
<keyword id="KW-0457">Lysine biosynthesis</keyword>
<keyword id="KW-1185">Reference proteome</keyword>
<keyword id="KW-0704">Schiff base</keyword>
<accession>B1VDC4</accession>
<organism>
    <name type="scientific">Corynebacterium urealyticum (strain ATCC 43042 / DSM 7109)</name>
    <dbReference type="NCBI Taxonomy" id="504474"/>
    <lineage>
        <taxon>Bacteria</taxon>
        <taxon>Bacillati</taxon>
        <taxon>Actinomycetota</taxon>
        <taxon>Actinomycetes</taxon>
        <taxon>Mycobacteriales</taxon>
        <taxon>Corynebacteriaceae</taxon>
        <taxon>Corynebacterium</taxon>
    </lineage>
</organism>
<reference key="1">
    <citation type="journal article" date="2008" name="J. Biotechnol.">
        <title>The lifestyle of Corynebacterium urealyticum derived from its complete genome sequence established by pyrosequencing.</title>
        <authorList>
            <person name="Tauch A."/>
            <person name="Trost E."/>
            <person name="Tilker A."/>
            <person name="Ludewig U."/>
            <person name="Schneiker S."/>
            <person name="Goesmann A."/>
            <person name="Arnold W."/>
            <person name="Bekel T."/>
            <person name="Brinkrolf K."/>
            <person name="Brune I."/>
            <person name="Goetker S."/>
            <person name="Kalinowski J."/>
            <person name="Kamp P.-B."/>
            <person name="Lobo F.P."/>
            <person name="Viehoever P."/>
            <person name="Weisshaar B."/>
            <person name="Soriano F."/>
            <person name="Droege M."/>
            <person name="Puehler A."/>
        </authorList>
    </citation>
    <scope>NUCLEOTIDE SEQUENCE [LARGE SCALE GENOMIC DNA]</scope>
    <source>
        <strain>ATCC 43042 / DSM 7109</strain>
    </source>
</reference>
<name>DAPA_CORU7</name>
<protein>
    <recommendedName>
        <fullName evidence="1">4-hydroxy-tetrahydrodipicolinate synthase</fullName>
        <shortName evidence="1">HTPA synthase</shortName>
        <ecNumber evidence="1">4.3.3.7</ecNumber>
    </recommendedName>
</protein>